<organism>
    <name type="scientific">Alteromonas mediterranea (strain DSM 17117 / CIP 110805 / LMG 28347 / Deep ecotype)</name>
    <dbReference type="NCBI Taxonomy" id="1774373"/>
    <lineage>
        <taxon>Bacteria</taxon>
        <taxon>Pseudomonadati</taxon>
        <taxon>Pseudomonadota</taxon>
        <taxon>Gammaproteobacteria</taxon>
        <taxon>Alteromonadales</taxon>
        <taxon>Alteromonadaceae</taxon>
        <taxon>Alteromonas/Salinimonas group</taxon>
        <taxon>Alteromonas</taxon>
    </lineage>
</organism>
<proteinExistence type="inferred from homology"/>
<dbReference type="EC" id="3.4.23.36" evidence="1"/>
<dbReference type="EMBL" id="CP001103">
    <property type="protein sequence ID" value="AEA98667.1"/>
    <property type="molecule type" value="Genomic_DNA"/>
</dbReference>
<dbReference type="RefSeq" id="WP_012517496.1">
    <property type="nucleotide sequence ID" value="NC_011138.3"/>
</dbReference>
<dbReference type="SMR" id="B4RVP1"/>
<dbReference type="GeneID" id="56343041"/>
<dbReference type="KEGG" id="amc:MADE_1012655"/>
<dbReference type="HOGENOM" id="CLU_083252_4_0_6"/>
<dbReference type="UniPathway" id="UPA00665"/>
<dbReference type="Proteomes" id="UP000001870">
    <property type="component" value="Chromosome"/>
</dbReference>
<dbReference type="GO" id="GO:0005886">
    <property type="term" value="C:plasma membrane"/>
    <property type="evidence" value="ECO:0007669"/>
    <property type="project" value="UniProtKB-SubCell"/>
</dbReference>
<dbReference type="GO" id="GO:0004190">
    <property type="term" value="F:aspartic-type endopeptidase activity"/>
    <property type="evidence" value="ECO:0007669"/>
    <property type="project" value="UniProtKB-UniRule"/>
</dbReference>
<dbReference type="GO" id="GO:0006508">
    <property type="term" value="P:proteolysis"/>
    <property type="evidence" value="ECO:0007669"/>
    <property type="project" value="UniProtKB-KW"/>
</dbReference>
<dbReference type="HAMAP" id="MF_00161">
    <property type="entry name" value="LspA"/>
    <property type="match status" value="1"/>
</dbReference>
<dbReference type="InterPro" id="IPR001872">
    <property type="entry name" value="Peptidase_A8"/>
</dbReference>
<dbReference type="NCBIfam" id="TIGR00077">
    <property type="entry name" value="lspA"/>
    <property type="match status" value="1"/>
</dbReference>
<dbReference type="PANTHER" id="PTHR33695">
    <property type="entry name" value="LIPOPROTEIN SIGNAL PEPTIDASE"/>
    <property type="match status" value="1"/>
</dbReference>
<dbReference type="PANTHER" id="PTHR33695:SF1">
    <property type="entry name" value="LIPOPROTEIN SIGNAL PEPTIDASE"/>
    <property type="match status" value="1"/>
</dbReference>
<dbReference type="Pfam" id="PF01252">
    <property type="entry name" value="Peptidase_A8"/>
    <property type="match status" value="1"/>
</dbReference>
<dbReference type="PRINTS" id="PR00781">
    <property type="entry name" value="LIPOSIGPTASE"/>
</dbReference>
<dbReference type="PROSITE" id="PS00855">
    <property type="entry name" value="SPASE_II"/>
    <property type="match status" value="1"/>
</dbReference>
<protein>
    <recommendedName>
        <fullName evidence="1">Lipoprotein signal peptidase</fullName>
        <ecNumber evidence="1">3.4.23.36</ecNumber>
    </recommendedName>
    <alternativeName>
        <fullName evidence="1">Prolipoprotein signal peptidase</fullName>
    </alternativeName>
    <alternativeName>
        <fullName evidence="1">Signal peptidase II</fullName>
        <shortName evidence="1">SPase II</shortName>
    </alternativeName>
</protein>
<comment type="function">
    <text evidence="1">This protein specifically catalyzes the removal of signal peptides from prolipoproteins.</text>
</comment>
<comment type="catalytic activity">
    <reaction evidence="1">
        <text>Release of signal peptides from bacterial membrane prolipoproteins. Hydrolyzes -Xaa-Yaa-Zaa-|-(S,diacylglyceryl)Cys-, in which Xaa is hydrophobic (preferably Leu), and Yaa (Ala or Ser) and Zaa (Gly or Ala) have small, neutral side chains.</text>
        <dbReference type="EC" id="3.4.23.36"/>
    </reaction>
</comment>
<comment type="pathway">
    <text evidence="1">Protein modification; lipoprotein biosynthesis (signal peptide cleavage).</text>
</comment>
<comment type="subcellular location">
    <subcellularLocation>
        <location evidence="1">Cell inner membrane</location>
        <topology evidence="1">Multi-pass membrane protein</topology>
    </subcellularLocation>
</comment>
<comment type="similarity">
    <text evidence="1">Belongs to the peptidase A8 family.</text>
</comment>
<accession>B4RVP1</accession>
<accession>F2G7R8</accession>
<sequence>MLKLFRETGLRFLWISALAFILDQWSKYTVIDTMSLYQSIQVLPFFNFTYVHNYGAAFSFLENAGGWQRWFFTAIAVVVSVVILWWLKQSPRSQKMLPVAFAFILGGALGNVYDRLVHGYVIDFLDFYVNNYHWPAFNIADSAIFIGAALLIIDMFKNGDKKSEENGAESKAGSANSSETIK</sequence>
<evidence type="ECO:0000255" key="1">
    <source>
        <dbReference type="HAMAP-Rule" id="MF_00161"/>
    </source>
</evidence>
<evidence type="ECO:0000256" key="2">
    <source>
        <dbReference type="SAM" id="MobiDB-lite"/>
    </source>
</evidence>
<reference key="1">
    <citation type="journal article" date="2008" name="ISME J.">
        <title>Comparative genomics of two ecotypes of the marine planktonic copiotroph Alteromonas macleodii suggests alternative lifestyles associated with different kinds of particulate organic matter.</title>
        <authorList>
            <person name="Ivars-Martinez E."/>
            <person name="Martin-Cuadrado A.-B."/>
            <person name="D'Auria G."/>
            <person name="Mira A."/>
            <person name="Ferriera S."/>
            <person name="Johnson J."/>
            <person name="Friedman R."/>
            <person name="Rodriguez-Valera F."/>
        </authorList>
    </citation>
    <scope>NUCLEOTIDE SEQUENCE [LARGE SCALE GENOMIC DNA]</scope>
    <source>
        <strain>DSM 17117 / CIP 110805 / LMG 28347 / Deep ecotype</strain>
    </source>
</reference>
<feature type="chain" id="PRO_1000097227" description="Lipoprotein signal peptidase">
    <location>
        <begin position="1"/>
        <end position="182"/>
    </location>
</feature>
<feature type="transmembrane region" description="Helical" evidence="1">
    <location>
        <begin position="12"/>
        <end position="32"/>
    </location>
</feature>
<feature type="transmembrane region" description="Helical" evidence="1">
    <location>
        <begin position="40"/>
        <end position="60"/>
    </location>
</feature>
<feature type="transmembrane region" description="Helical" evidence="1">
    <location>
        <begin position="70"/>
        <end position="90"/>
    </location>
</feature>
<feature type="transmembrane region" description="Helical" evidence="1">
    <location>
        <begin position="97"/>
        <end position="117"/>
    </location>
</feature>
<feature type="transmembrane region" description="Helical" evidence="1">
    <location>
        <begin position="136"/>
        <end position="156"/>
    </location>
</feature>
<feature type="region of interest" description="Disordered" evidence="2">
    <location>
        <begin position="161"/>
        <end position="182"/>
    </location>
</feature>
<feature type="compositionally biased region" description="Polar residues" evidence="2">
    <location>
        <begin position="173"/>
        <end position="182"/>
    </location>
</feature>
<feature type="active site" evidence="1">
    <location>
        <position position="123"/>
    </location>
</feature>
<feature type="active site" evidence="1">
    <location>
        <position position="141"/>
    </location>
</feature>
<keyword id="KW-0064">Aspartyl protease</keyword>
<keyword id="KW-0997">Cell inner membrane</keyword>
<keyword id="KW-1003">Cell membrane</keyword>
<keyword id="KW-0378">Hydrolase</keyword>
<keyword id="KW-0472">Membrane</keyword>
<keyword id="KW-0645">Protease</keyword>
<keyword id="KW-0812">Transmembrane</keyword>
<keyword id="KW-1133">Transmembrane helix</keyword>
<name>LSPA_ALTMD</name>
<gene>
    <name evidence="1" type="primary">lspA</name>
    <name type="ordered locus">MADE_1012655</name>
</gene>